<gene>
    <name type="primary">SEZ6L</name>
    <name type="synonym">KIAA0927</name>
    <name type="ORF">UNQ2542/PRO6094</name>
</gene>
<name>SE6L1_HUMAN</name>
<protein>
    <recommendedName>
        <fullName>Seizure 6-like protein</fullName>
    </recommendedName>
</protein>
<keyword id="KW-0002">3D-structure</keyword>
<keyword id="KW-0025">Alternative splicing</keyword>
<keyword id="KW-1015">Disulfide bond</keyword>
<keyword id="KW-0256">Endoplasmic reticulum</keyword>
<keyword id="KW-0325">Glycoprotein</keyword>
<keyword id="KW-0472">Membrane</keyword>
<keyword id="KW-1267">Proteomics identification</keyword>
<keyword id="KW-1185">Reference proteome</keyword>
<keyword id="KW-0677">Repeat</keyword>
<keyword id="KW-0732">Signal</keyword>
<keyword id="KW-0768">Sushi</keyword>
<keyword id="KW-0812">Transmembrane</keyword>
<keyword id="KW-1133">Transmembrane helix</keyword>
<organism>
    <name type="scientific">Homo sapiens</name>
    <name type="common">Human</name>
    <dbReference type="NCBI Taxonomy" id="9606"/>
    <lineage>
        <taxon>Eukaryota</taxon>
        <taxon>Metazoa</taxon>
        <taxon>Chordata</taxon>
        <taxon>Craniata</taxon>
        <taxon>Vertebrata</taxon>
        <taxon>Euteleostomi</taxon>
        <taxon>Mammalia</taxon>
        <taxon>Eutheria</taxon>
        <taxon>Euarchontoglires</taxon>
        <taxon>Primates</taxon>
        <taxon>Haplorrhini</taxon>
        <taxon>Catarrhini</taxon>
        <taxon>Hominidae</taxon>
        <taxon>Homo</taxon>
    </lineage>
</organism>
<feature type="signal peptide" evidence="2">
    <location>
        <begin position="1"/>
        <end position="28"/>
    </location>
</feature>
<feature type="chain" id="PRO_0000022323" description="Seizure 6-like protein">
    <location>
        <begin position="29"/>
        <end position="1024"/>
    </location>
</feature>
<feature type="topological domain" description="Extracellular" evidence="2">
    <location>
        <begin position="29"/>
        <end position="958"/>
    </location>
</feature>
<feature type="transmembrane region" description="Helical" evidence="2">
    <location>
        <begin position="959"/>
        <end position="979"/>
    </location>
</feature>
<feature type="topological domain" description="Cytoplasmic" evidence="2">
    <location>
        <begin position="980"/>
        <end position="1024"/>
    </location>
</feature>
<feature type="domain" description="CUB 1" evidence="3">
    <location>
        <begin position="281"/>
        <end position="389"/>
    </location>
</feature>
<feature type="domain" description="Sushi 1" evidence="4">
    <location>
        <begin position="391"/>
        <end position="450"/>
    </location>
</feature>
<feature type="domain" description="CUB 2" evidence="3">
    <location>
        <begin position="452"/>
        <end position="562"/>
    </location>
</feature>
<feature type="domain" description="Sushi 2" evidence="4">
    <location>
        <begin position="565"/>
        <end position="626"/>
    </location>
</feature>
<feature type="domain" description="CUB 3" evidence="3">
    <location>
        <begin position="628"/>
        <end position="739"/>
    </location>
</feature>
<feature type="domain" description="Sushi 3" evidence="4">
    <location>
        <begin position="743"/>
        <end position="802"/>
    </location>
</feature>
<feature type="domain" description="Sushi 4" evidence="4">
    <location>
        <begin position="804"/>
        <end position="867"/>
    </location>
</feature>
<feature type="domain" description="Sushi 5" evidence="4">
    <location>
        <begin position="871"/>
        <end position="932"/>
    </location>
</feature>
<feature type="region of interest" description="Disordered" evidence="5">
    <location>
        <begin position="33"/>
        <end position="77"/>
    </location>
</feature>
<feature type="region of interest" description="Disordered" evidence="5">
    <location>
        <begin position="108"/>
        <end position="184"/>
    </location>
</feature>
<feature type="region of interest" description="O-glycosylated at one site">
    <location>
        <begin position="147"/>
        <end position="161"/>
    </location>
</feature>
<feature type="region of interest" description="O-glycosylated at one site">
    <location>
        <begin position="176"/>
        <end position="180"/>
    </location>
</feature>
<feature type="region of interest" description="Disordered" evidence="5">
    <location>
        <begin position="212"/>
        <end position="234"/>
    </location>
</feature>
<feature type="compositionally biased region" description="Basic and acidic residues" evidence="5">
    <location>
        <begin position="56"/>
        <end position="66"/>
    </location>
</feature>
<feature type="compositionally biased region" description="Basic residues" evidence="5">
    <location>
        <begin position="110"/>
        <end position="120"/>
    </location>
</feature>
<feature type="compositionally biased region" description="Polar residues" evidence="5">
    <location>
        <begin position="138"/>
        <end position="162"/>
    </location>
</feature>
<feature type="glycosylation site" description="O-linked (GalNAc...) serine" evidence="7">
    <location>
        <position position="49"/>
    </location>
</feature>
<feature type="glycosylation site" description="N-linked (GlcNAc...) asparagine" evidence="2">
    <location>
        <position position="311"/>
    </location>
</feature>
<feature type="glycosylation site" description="N-linked (GlcNAc...) asparagine" evidence="2">
    <location>
        <position position="328"/>
    </location>
</feature>
<feature type="glycosylation site" description="N-linked (GlcNAc...) asparagine" evidence="2">
    <location>
        <position position="350"/>
    </location>
</feature>
<feature type="glycosylation site" description="N-linked (GlcNAc...) asparagine" evidence="2">
    <location>
        <position position="435"/>
    </location>
</feature>
<feature type="glycosylation site" description="N-linked (GlcNAc...) asparagine" evidence="2">
    <location>
        <position position="458"/>
    </location>
</feature>
<feature type="glycosylation site" description="N-linked (GlcNAc...) asparagine" evidence="2">
    <location>
        <position position="474"/>
    </location>
</feature>
<feature type="glycosylation site" description="N-linked (GlcNAc...) asparagine" evidence="2">
    <location>
        <position position="514"/>
    </location>
</feature>
<feature type="glycosylation site" description="N-linked (GlcNAc...) asparagine" evidence="2">
    <location>
        <position position="576"/>
    </location>
</feature>
<feature type="glycosylation site" description="N-linked (GlcNAc...) asparagine" evidence="2">
    <location>
        <position position="618"/>
    </location>
</feature>
<feature type="glycosylation site" description="N-linked (GlcNAc...) asparagine" evidence="2">
    <location>
        <position position="674"/>
    </location>
</feature>
<feature type="glycosylation site" description="N-linked (GlcNAc...) asparagine" evidence="2">
    <location>
        <position position="742"/>
    </location>
</feature>
<feature type="disulfide bond" evidence="1">
    <location>
        <begin position="281"/>
        <end position="308"/>
    </location>
</feature>
<feature type="disulfide bond" evidence="1">
    <location>
        <begin position="393"/>
        <end position="433"/>
    </location>
</feature>
<feature type="disulfide bond" evidence="1">
    <location>
        <begin position="419"/>
        <end position="448"/>
    </location>
</feature>
<feature type="disulfide bond" evidence="1">
    <location>
        <begin position="567"/>
        <end position="609"/>
    </location>
</feature>
<feature type="disulfide bond" evidence="1">
    <location>
        <begin position="594"/>
        <end position="624"/>
    </location>
</feature>
<feature type="disulfide bond" evidence="8">
    <location>
        <begin position="745"/>
        <end position="787"/>
    </location>
</feature>
<feature type="disulfide bond" evidence="8">
    <location>
        <begin position="773"/>
        <end position="800"/>
    </location>
</feature>
<feature type="disulfide bond" evidence="1">
    <location>
        <begin position="806"/>
        <end position="848"/>
    </location>
</feature>
<feature type="disulfide bond" evidence="1">
    <location>
        <begin position="834"/>
        <end position="865"/>
    </location>
</feature>
<feature type="disulfide bond" evidence="1">
    <location>
        <begin position="873"/>
        <end position="915"/>
    </location>
</feature>
<feature type="disulfide bond" evidence="1">
    <location>
        <begin position="901"/>
        <end position="930"/>
    </location>
</feature>
<feature type="splice variant" id="VSP_003976" description="In isoform 1 and isoform 2." evidence="10 13">
    <location>
        <begin position="1"/>
        <end position="227"/>
    </location>
</feature>
<feature type="splice variant" id="VSP_003981" description="In isoform 3." evidence="9">
    <original>IMYCTDPGEVDHSTRLISDPVLLVGTTIQYTCNPGFVLEGSSLLTCYSRETGTPIWTSRLPHCVS</original>
    <variation>T</variation>
    <location>
        <begin position="803"/>
        <end position="867"/>
    </location>
</feature>
<feature type="splice variant" id="VSP_013022" description="In isoform 5." evidence="12">
    <original>SEESLACDNPGLPENGYQILYKRLYLPGESLTFMCYEGFELMGEVTIRCILGQPSHWNGPLPVCKVNQDSFEHALEV</original>
    <variation>L</variation>
    <location>
        <begin position="867"/>
        <end position="943"/>
    </location>
</feature>
<feature type="splice variant" id="VSP_003977" description="In isoform 1." evidence="10 13">
    <location>
        <begin position="868"/>
        <end position="944"/>
    </location>
</feature>
<feature type="splice variant" id="VSP_003978" description="In isoform 3 and isoform 7." evidence="9 13">
    <location>
        <begin position="933"/>
        <end position="943"/>
    </location>
</feature>
<feature type="splice variant" id="VSP_003979" description="In isoform 2 and isoform 6." evidence="10 11">
    <location>
        <position position="943"/>
    </location>
</feature>
<feature type="splice variant" id="VSP_003980" description="In isoform 1 and isoform 2." evidence="10 13">
    <original>ETREYEVSI</original>
    <variation>GTQKV</variation>
    <location>
        <begin position="1016"/>
        <end position="1024"/>
    </location>
</feature>
<feature type="sequence variant" id="VAR_043338" description="In dbSNP:rs6004989.">
    <original>P</original>
    <variation>L</variation>
    <location>
        <position position="52"/>
    </location>
</feature>
<feature type="sequence variant" id="VAR_024348" description="In dbSNP:rs137203.">
    <original>W</original>
    <variation>L</variation>
    <location>
        <position position="185"/>
    </location>
</feature>
<feature type="sequence variant" id="VAR_020330" description="In dbSNP:rs663048." evidence="6">
    <original>M</original>
    <variation>I</variation>
    <location>
        <position position="430"/>
    </location>
</feature>
<feature type="sequence variant" id="VAR_043339" description="In dbSNP:rs586542.">
    <original>Q</original>
    <variation>H</variation>
    <location>
        <position position="671"/>
    </location>
</feature>
<feature type="strand" evidence="15">
    <location>
        <begin position="754"/>
        <end position="756"/>
    </location>
</feature>
<feature type="strand" evidence="15">
    <location>
        <begin position="759"/>
        <end position="762"/>
    </location>
</feature>
<feature type="strand" evidence="15">
    <location>
        <begin position="768"/>
        <end position="773"/>
    </location>
</feature>
<feature type="strand" evidence="15">
    <location>
        <begin position="777"/>
        <end position="781"/>
    </location>
</feature>
<feature type="strand" evidence="15">
    <location>
        <begin position="783"/>
        <end position="787"/>
    </location>
</feature>
<feature type="strand" evidence="15">
    <location>
        <begin position="793"/>
        <end position="795"/>
    </location>
</feature>
<feature type="strand" evidence="15">
    <location>
        <begin position="799"/>
        <end position="802"/>
    </location>
</feature>
<proteinExistence type="evidence at protein level"/>
<accession>Q9BYH1</accession>
<accession>A0AUW7</accession>
<accession>B0QYG4</accession>
<accession>B0QYG5</accession>
<accession>B7ZLJ6</accession>
<accession>G8JLP3</accession>
<accession>O95917</accession>
<accession>Q5THY5</accession>
<accession>Q6IBZ4</accession>
<accession>Q6UXD4</accession>
<accession>Q9NUI3</accession>
<accession>Q9NUI4</accession>
<accession>Q9NUI5</accession>
<accession>Q9Y2E1</accession>
<accession>Q9Y3J6</accession>
<dbReference type="EMBL" id="AB041736">
    <property type="protein sequence ID" value="BAB40970.1"/>
    <property type="molecule type" value="mRNA"/>
</dbReference>
<dbReference type="EMBL" id="AB023144">
    <property type="protein sequence ID" value="BAA76771.2"/>
    <property type="status" value="ALT_INIT"/>
    <property type="molecule type" value="mRNA"/>
</dbReference>
<dbReference type="EMBL" id="AL035545">
    <property type="protein sequence ID" value="CAB37431.1"/>
    <property type="molecule type" value="mRNA"/>
</dbReference>
<dbReference type="EMBL" id="AL050253">
    <property type="protein sequence ID" value="CAB43355.1"/>
    <property type="molecule type" value="mRNA"/>
</dbReference>
<dbReference type="EMBL" id="AY358405">
    <property type="protein sequence ID" value="AAQ88771.1"/>
    <property type="molecule type" value="mRNA"/>
</dbReference>
<dbReference type="EMBL" id="CR456574">
    <property type="protein sequence ID" value="CAG30460.1"/>
    <property type="molecule type" value="mRNA"/>
</dbReference>
<dbReference type="EMBL" id="AL022337">
    <property type="status" value="NOT_ANNOTATED_CDS"/>
    <property type="molecule type" value="Genomic_DNA"/>
</dbReference>
<dbReference type="EMBL" id="AL023513">
    <property type="status" value="NOT_ANNOTATED_CDS"/>
    <property type="molecule type" value="Genomic_DNA"/>
</dbReference>
<dbReference type="EMBL" id="AL078460">
    <property type="status" value="NOT_ANNOTATED_CDS"/>
    <property type="molecule type" value="Genomic_DNA"/>
</dbReference>
<dbReference type="EMBL" id="AL080273">
    <property type="status" value="NOT_ANNOTATED_CDS"/>
    <property type="molecule type" value="Genomic_DNA"/>
</dbReference>
<dbReference type="EMBL" id="BC126115">
    <property type="protein sequence ID" value="AAI26116.1"/>
    <property type="molecule type" value="mRNA"/>
</dbReference>
<dbReference type="EMBL" id="BC143851">
    <property type="protein sequence ID" value="AAI43852.1"/>
    <property type="molecule type" value="mRNA"/>
</dbReference>
<dbReference type="CCDS" id="CCDS13833.1">
    <molecule id="Q9BYH1-1"/>
</dbReference>
<dbReference type="CCDS" id="CCDS54508.1">
    <molecule id="Q9BYH1-6"/>
</dbReference>
<dbReference type="CCDS" id="CCDS54509.1">
    <molecule id="Q9BYH1-7"/>
</dbReference>
<dbReference type="CCDS" id="CCDS54510.1">
    <molecule id="Q9BYH1-5"/>
</dbReference>
<dbReference type="CCDS" id="CCDS54511.1">
    <molecule id="Q9BYH1-4"/>
</dbReference>
<dbReference type="RefSeq" id="NP_001171702.1">
    <molecule id="Q9BYH1-6"/>
    <property type="nucleotide sequence ID" value="NM_001184773.2"/>
</dbReference>
<dbReference type="RefSeq" id="NP_001171703.1">
    <molecule id="Q9BYH1-7"/>
    <property type="nucleotide sequence ID" value="NM_001184774.2"/>
</dbReference>
<dbReference type="RefSeq" id="NP_001171704.1">
    <property type="nucleotide sequence ID" value="NM_001184775.1"/>
</dbReference>
<dbReference type="RefSeq" id="NP_001171705.1">
    <molecule id="Q9BYH1-4"/>
    <property type="nucleotide sequence ID" value="NM_001184776.2"/>
</dbReference>
<dbReference type="RefSeq" id="NP_001171706.1">
    <molecule id="Q9BYH1-5"/>
    <property type="nucleotide sequence ID" value="NM_001184777.2"/>
</dbReference>
<dbReference type="RefSeq" id="NP_066938.2">
    <molecule id="Q9BYH1-1"/>
    <property type="nucleotide sequence ID" value="NM_021115.4"/>
</dbReference>
<dbReference type="PDB" id="2YRA">
    <property type="method" value="NMR"/>
    <property type="chains" value="A=745-802"/>
</dbReference>
<dbReference type="PDBsum" id="2YRA"/>
<dbReference type="SMR" id="Q9BYH1"/>
<dbReference type="BioGRID" id="117088">
    <property type="interactions" value="10"/>
</dbReference>
<dbReference type="FunCoup" id="Q9BYH1">
    <property type="interactions" value="163"/>
</dbReference>
<dbReference type="IntAct" id="Q9BYH1">
    <property type="interactions" value="9"/>
</dbReference>
<dbReference type="STRING" id="9606.ENSP00000248933"/>
<dbReference type="GlyCosmos" id="Q9BYH1">
    <property type="glycosylation" value="14 sites, 1 glycan"/>
</dbReference>
<dbReference type="GlyGen" id="Q9BYH1">
    <property type="glycosylation" value="14 sites, 1 O-linked glycan (2 sites)"/>
</dbReference>
<dbReference type="iPTMnet" id="Q9BYH1"/>
<dbReference type="PhosphoSitePlus" id="Q9BYH1"/>
<dbReference type="BioMuta" id="SEZ6L"/>
<dbReference type="DMDM" id="22002000"/>
<dbReference type="MassIVE" id="Q9BYH1"/>
<dbReference type="PaxDb" id="9606-ENSP00000248933"/>
<dbReference type="PeptideAtlas" id="Q9BYH1"/>
<dbReference type="ProteomicsDB" id="34294"/>
<dbReference type="ProteomicsDB" id="79643">
    <molecule id="Q9BYH1-1"/>
</dbReference>
<dbReference type="ProteomicsDB" id="79644">
    <molecule id="Q9BYH1-2"/>
</dbReference>
<dbReference type="ProteomicsDB" id="79645">
    <molecule id="Q9BYH1-3"/>
</dbReference>
<dbReference type="ProteomicsDB" id="79646">
    <molecule id="Q9BYH1-4"/>
</dbReference>
<dbReference type="ProteomicsDB" id="79647">
    <molecule id="Q9BYH1-5"/>
</dbReference>
<dbReference type="ProteomicsDB" id="79648">
    <molecule id="Q9BYH1-6"/>
</dbReference>
<dbReference type="Antibodypedia" id="54796">
    <property type="antibodies" value="66 antibodies from 17 providers"/>
</dbReference>
<dbReference type="DNASU" id="23544"/>
<dbReference type="Ensembl" id="ENST00000248933.11">
    <molecule id="Q9BYH1-1"/>
    <property type="protein sequence ID" value="ENSP00000248933.6"/>
    <property type="gene ID" value="ENSG00000100095.19"/>
</dbReference>
<dbReference type="Ensembl" id="ENST00000343706.8">
    <molecule id="Q9BYH1-5"/>
    <property type="protein sequence ID" value="ENSP00000342661.4"/>
    <property type="gene ID" value="ENSG00000100095.19"/>
</dbReference>
<dbReference type="Ensembl" id="ENST00000360929.7">
    <molecule id="Q9BYH1-4"/>
    <property type="protein sequence ID" value="ENSP00000354185.3"/>
    <property type="gene ID" value="ENSG00000100095.19"/>
</dbReference>
<dbReference type="Ensembl" id="ENST00000404234.7">
    <molecule id="Q9BYH1-6"/>
    <property type="protein sequence ID" value="ENSP00000384772.3"/>
    <property type="gene ID" value="ENSG00000100095.19"/>
</dbReference>
<dbReference type="Ensembl" id="ENST00000629590.2">
    <molecule id="Q9BYH1-7"/>
    <property type="protein sequence ID" value="ENSP00000485720.1"/>
    <property type="gene ID" value="ENSG00000100095.19"/>
</dbReference>
<dbReference type="GeneID" id="23544"/>
<dbReference type="KEGG" id="hsa:23544"/>
<dbReference type="MANE-Select" id="ENST00000248933.11">
    <property type="protein sequence ID" value="ENSP00000248933.6"/>
    <property type="RefSeq nucleotide sequence ID" value="NM_021115.5"/>
    <property type="RefSeq protein sequence ID" value="NP_066938.2"/>
</dbReference>
<dbReference type="UCSC" id="uc003acb.4">
    <molecule id="Q9BYH1-1"/>
    <property type="organism name" value="human"/>
</dbReference>
<dbReference type="AGR" id="HGNC:10763"/>
<dbReference type="CTD" id="23544"/>
<dbReference type="DisGeNET" id="23544"/>
<dbReference type="GeneCards" id="SEZ6L"/>
<dbReference type="HGNC" id="HGNC:10763">
    <property type="gene designation" value="SEZ6L"/>
</dbReference>
<dbReference type="HPA" id="ENSG00000100095">
    <property type="expression patterns" value="Tissue enriched (brain)"/>
</dbReference>
<dbReference type="MalaCards" id="SEZ6L"/>
<dbReference type="MIM" id="607021">
    <property type="type" value="gene"/>
</dbReference>
<dbReference type="neXtProt" id="NX_Q9BYH1"/>
<dbReference type="OpenTargets" id="ENSG00000100095"/>
<dbReference type="PharmGKB" id="PA35681"/>
<dbReference type="VEuPathDB" id="HostDB:ENSG00000100095"/>
<dbReference type="eggNOG" id="ENOG502QVYR">
    <property type="taxonomic scope" value="Eukaryota"/>
</dbReference>
<dbReference type="GeneTree" id="ENSGT00940000158873"/>
<dbReference type="InParanoid" id="Q9BYH1"/>
<dbReference type="OMA" id="NRDCFGN"/>
<dbReference type="OrthoDB" id="9935125at2759"/>
<dbReference type="PAN-GO" id="Q9BYH1">
    <property type="GO annotations" value="4 GO annotations based on evolutionary models"/>
</dbReference>
<dbReference type="PhylomeDB" id="Q9BYH1"/>
<dbReference type="TreeFam" id="TF330037"/>
<dbReference type="PathwayCommons" id="Q9BYH1"/>
<dbReference type="SignaLink" id="Q9BYH1"/>
<dbReference type="BioGRID-ORCS" id="23544">
    <property type="hits" value="23 hits in 1140 CRISPR screens"/>
</dbReference>
<dbReference type="ChiTaRS" id="SEZ6L">
    <property type="organism name" value="human"/>
</dbReference>
<dbReference type="EvolutionaryTrace" id="Q9BYH1"/>
<dbReference type="GeneWiki" id="SEZ6L"/>
<dbReference type="GenomeRNAi" id="23544"/>
<dbReference type="Pharos" id="Q9BYH1">
    <property type="development level" value="Tbio"/>
</dbReference>
<dbReference type="PRO" id="PR:Q9BYH1"/>
<dbReference type="Proteomes" id="UP000005640">
    <property type="component" value="Chromosome 22"/>
</dbReference>
<dbReference type="RNAct" id="Q9BYH1">
    <property type="molecule type" value="protein"/>
</dbReference>
<dbReference type="Bgee" id="ENSG00000100095">
    <property type="expression patterns" value="Expressed in ganglionic eminence and 141 other cell types or tissues"/>
</dbReference>
<dbReference type="ExpressionAtlas" id="Q9BYH1">
    <property type="expression patterns" value="baseline and differential"/>
</dbReference>
<dbReference type="GO" id="GO:0005783">
    <property type="term" value="C:endoplasmic reticulum"/>
    <property type="evidence" value="ECO:0000318"/>
    <property type="project" value="GO_Central"/>
</dbReference>
<dbReference type="GO" id="GO:0005789">
    <property type="term" value="C:endoplasmic reticulum membrane"/>
    <property type="evidence" value="ECO:0007669"/>
    <property type="project" value="UniProtKB-SubCell"/>
</dbReference>
<dbReference type="GO" id="GO:0043025">
    <property type="term" value="C:neuronal cell body"/>
    <property type="evidence" value="ECO:0000318"/>
    <property type="project" value="GO_Central"/>
</dbReference>
<dbReference type="GO" id="GO:0060074">
    <property type="term" value="P:synapse maturation"/>
    <property type="evidence" value="ECO:0000318"/>
    <property type="project" value="GO_Central"/>
</dbReference>
<dbReference type="CDD" id="cd00033">
    <property type="entry name" value="CCP"/>
    <property type="match status" value="5"/>
</dbReference>
<dbReference type="CDD" id="cd00041">
    <property type="entry name" value="CUB"/>
    <property type="match status" value="3"/>
</dbReference>
<dbReference type="FunFam" id="2.10.70.10:FF:000025">
    <property type="entry name" value="seizure 6-like protein 2 isoform X2"/>
    <property type="match status" value="1"/>
</dbReference>
<dbReference type="FunFam" id="2.10.70.10:FF:000009">
    <property type="entry name" value="Seizure related 6 homolog like"/>
    <property type="match status" value="1"/>
</dbReference>
<dbReference type="FunFam" id="2.10.70.10:FF:000010">
    <property type="entry name" value="Seizure related 6 homolog like"/>
    <property type="match status" value="1"/>
</dbReference>
<dbReference type="FunFam" id="2.10.70.10:FF:000012">
    <property type="entry name" value="Seizure related 6 homolog like"/>
    <property type="match status" value="1"/>
</dbReference>
<dbReference type="FunFam" id="2.60.120.290:FF:000030">
    <property type="entry name" value="Seizure related 6 homolog like"/>
    <property type="match status" value="1"/>
</dbReference>
<dbReference type="Gene3D" id="2.10.70.10">
    <property type="entry name" value="Complement Module, domain 1"/>
    <property type="match status" value="5"/>
</dbReference>
<dbReference type="Gene3D" id="2.60.120.290">
    <property type="entry name" value="Spermadhesin, CUB domain"/>
    <property type="match status" value="3"/>
</dbReference>
<dbReference type="InterPro" id="IPR000859">
    <property type="entry name" value="CUB_dom"/>
</dbReference>
<dbReference type="InterPro" id="IPR051277">
    <property type="entry name" value="SEZ6_CSMD_C4BPB_Regulators"/>
</dbReference>
<dbReference type="InterPro" id="IPR035914">
    <property type="entry name" value="Sperma_CUB_dom_sf"/>
</dbReference>
<dbReference type="InterPro" id="IPR035976">
    <property type="entry name" value="Sushi/SCR/CCP_sf"/>
</dbReference>
<dbReference type="InterPro" id="IPR000436">
    <property type="entry name" value="Sushi_SCR_CCP_dom"/>
</dbReference>
<dbReference type="PANTHER" id="PTHR45656">
    <property type="entry name" value="PROTEIN CBR-CLEC-78"/>
    <property type="match status" value="1"/>
</dbReference>
<dbReference type="PANTHER" id="PTHR45656:SF8">
    <property type="entry name" value="SEIZURE 6-LIKE PROTEIN"/>
    <property type="match status" value="1"/>
</dbReference>
<dbReference type="Pfam" id="PF00431">
    <property type="entry name" value="CUB"/>
    <property type="match status" value="2"/>
</dbReference>
<dbReference type="Pfam" id="PF00084">
    <property type="entry name" value="Sushi"/>
    <property type="match status" value="5"/>
</dbReference>
<dbReference type="SMART" id="SM00032">
    <property type="entry name" value="CCP"/>
    <property type="match status" value="5"/>
</dbReference>
<dbReference type="SMART" id="SM00042">
    <property type="entry name" value="CUB"/>
    <property type="match status" value="3"/>
</dbReference>
<dbReference type="SUPFAM" id="SSF57535">
    <property type="entry name" value="Complement control module/SCR domain"/>
    <property type="match status" value="5"/>
</dbReference>
<dbReference type="SUPFAM" id="SSF49854">
    <property type="entry name" value="Spermadhesin, CUB domain"/>
    <property type="match status" value="3"/>
</dbReference>
<dbReference type="PROSITE" id="PS01180">
    <property type="entry name" value="CUB"/>
    <property type="match status" value="3"/>
</dbReference>
<dbReference type="PROSITE" id="PS50923">
    <property type="entry name" value="SUSHI"/>
    <property type="match status" value="5"/>
</dbReference>
<comment type="function">
    <text evidence="1">May contribute to specialized endoplasmic reticulum functions in neurons.</text>
</comment>
<comment type="interaction">
    <interactant intactId="EBI-12012146">
        <id>Q9BYH1-5</id>
    </interactant>
    <interactant intactId="EBI-473189">
        <id>Q96D09</id>
        <label>GPRASP2</label>
    </interactant>
    <organismsDiffer>false</organismsDiffer>
    <experiments>3</experiments>
</comment>
<comment type="interaction">
    <interactant intactId="EBI-12012146">
        <id>Q9BYH1-5</id>
    </interactant>
    <interactant intactId="EBI-741480">
        <id>Q9UMX0</id>
        <label>UBQLN1</label>
    </interactant>
    <organismsDiffer>false</organismsDiffer>
    <experiments>3</experiments>
</comment>
<comment type="interaction">
    <interactant intactId="EBI-12012146">
        <id>Q9BYH1-5</id>
    </interactant>
    <interactant intactId="EBI-947187">
        <id>Q9UHD9</id>
        <label>UBQLN2</label>
    </interactant>
    <organismsDiffer>false</organismsDiffer>
    <experiments>3</experiments>
</comment>
<comment type="subcellular location">
    <subcellularLocation>
        <location evidence="1">Endoplasmic reticulum membrane</location>
        <topology evidence="1">Single-pass type I membrane protein</topology>
    </subcellularLocation>
</comment>
<comment type="alternative products">
    <event type="alternative splicing"/>
    <isoform>
        <id>Q9BYH1-1</id>
        <name>4</name>
        <sequence type="displayed"/>
    </isoform>
    <isoform>
        <id>Q9BYH1-2</id>
        <name>1</name>
        <sequence type="described" ref="VSP_003976 VSP_003977 VSP_003980"/>
    </isoform>
    <isoform>
        <id>Q9BYH1-3</id>
        <name>2</name>
        <sequence type="described" ref="VSP_003976 VSP_003979 VSP_003980"/>
    </isoform>
    <isoform>
        <id>Q9BYH1-4</id>
        <name>3</name>
        <sequence type="described" ref="VSP_003981 VSP_003978"/>
    </isoform>
    <isoform>
        <id>Q9BYH1-5</id>
        <name>5</name>
        <sequence type="described" ref="VSP_013022"/>
    </isoform>
    <isoform>
        <id>Q9BYH1-6</id>
        <name>6</name>
        <sequence type="described" ref="VSP_003979"/>
    </isoform>
    <isoform>
        <id>Q9BYH1-7</id>
        <name>7</name>
        <sequence type="described" ref="VSP_003978"/>
    </isoform>
    <text>Experimental confirmation may be lacking for some isoforms.</text>
</comment>
<comment type="tissue specificity">
    <text>Widely expressed, including adult and fetal brains and lungs. Not expressed in all lung cancer cell lines.</text>
</comment>
<comment type="PTM">
    <text evidence="7">O-glycosylated.</text>
</comment>
<comment type="similarity">
    <text evidence="14">Belongs to the SEZ6 family.</text>
</comment>
<comment type="sequence caution" evidence="14">
    <conflict type="erroneous initiation">
        <sequence resource="EMBL-CDS" id="BAA76771"/>
    </conflict>
    <text>Extended N-terminus.</text>
</comment>
<reference key="1">
    <citation type="journal article" date="2000" name="Oncogene">
        <title>Identification of a 428-kb homozygously deleted region disrupting the SEZ6L gene at 22q12.1 in a lung cancer cell line.</title>
        <authorList>
            <person name="Nishioka M."/>
            <person name="Kohno T."/>
            <person name="Takahashi M."/>
            <person name="Niki T."/>
            <person name="Yamada T."/>
            <person name="Sone S."/>
            <person name="Yokota J."/>
        </authorList>
    </citation>
    <scope>NUCLEOTIDE SEQUENCE [MRNA] (ISOFORM 4)</scope>
    <source>
        <tissue>Brain</tissue>
    </source>
</reference>
<reference key="2">
    <citation type="journal article" date="1999" name="DNA Res.">
        <title>Prediction of the coding sequences of unidentified human genes. XIII. The complete sequences of 100 new cDNA clones from brain which code for large proteins in vitro.</title>
        <authorList>
            <person name="Nagase T."/>
            <person name="Ishikawa K."/>
            <person name="Suyama M."/>
            <person name="Kikuno R."/>
            <person name="Hirosawa M."/>
            <person name="Miyajima N."/>
            <person name="Tanaka A."/>
            <person name="Kotani H."/>
            <person name="Nomura N."/>
            <person name="Ohara O."/>
        </authorList>
    </citation>
    <scope>NUCLEOTIDE SEQUENCE [LARGE SCALE MRNA] (ISOFORM 3)</scope>
    <source>
        <tissue>Brain</tissue>
    </source>
</reference>
<reference key="3">
    <citation type="journal article" date="2003" name="Genome Res.">
        <title>Reevaluating human gene annotation: a second-generation analysis of chromosome 22.</title>
        <authorList>
            <person name="Collins J.E."/>
            <person name="Goward M.E."/>
            <person name="Cole C.G."/>
            <person name="Smink L.J."/>
            <person name="Huckle E.J."/>
            <person name="Knowles S."/>
            <person name="Bye J.M."/>
            <person name="Beare D.M."/>
            <person name="Dunham I."/>
        </authorList>
    </citation>
    <scope>NUCLEOTIDE SEQUENCE [LARGE SCALE MRNA] (ISOFORMS 1 AND 2)</scope>
    <source>
        <tissue>Fetal brain</tissue>
    </source>
</reference>
<reference key="4">
    <citation type="journal article" date="2003" name="Genome Res.">
        <title>The secreted protein discovery initiative (SPDI), a large-scale effort to identify novel human secreted and transmembrane proteins: a bioinformatics assessment.</title>
        <authorList>
            <person name="Clark H.F."/>
            <person name="Gurney A.L."/>
            <person name="Abaya E."/>
            <person name="Baker K."/>
            <person name="Baldwin D.T."/>
            <person name="Brush J."/>
            <person name="Chen J."/>
            <person name="Chow B."/>
            <person name="Chui C."/>
            <person name="Crowley C."/>
            <person name="Currell B."/>
            <person name="Deuel B."/>
            <person name="Dowd P."/>
            <person name="Eaton D."/>
            <person name="Foster J.S."/>
            <person name="Grimaldi C."/>
            <person name="Gu Q."/>
            <person name="Hass P.E."/>
            <person name="Heldens S."/>
            <person name="Huang A."/>
            <person name="Kim H.S."/>
            <person name="Klimowski L."/>
            <person name="Jin Y."/>
            <person name="Johnson S."/>
            <person name="Lee J."/>
            <person name="Lewis L."/>
            <person name="Liao D."/>
            <person name="Mark M.R."/>
            <person name="Robbie E."/>
            <person name="Sanchez C."/>
            <person name="Schoenfeld J."/>
            <person name="Seshagiri S."/>
            <person name="Simmons L."/>
            <person name="Singh J."/>
            <person name="Smith V."/>
            <person name="Stinson J."/>
            <person name="Vagts A."/>
            <person name="Vandlen R.L."/>
            <person name="Watanabe C."/>
            <person name="Wieand D."/>
            <person name="Woods K."/>
            <person name="Xie M.-H."/>
            <person name="Yansura D.G."/>
            <person name="Yi S."/>
            <person name="Yu G."/>
            <person name="Yuan J."/>
            <person name="Zhang M."/>
            <person name="Zhang Z."/>
            <person name="Goddard A.D."/>
            <person name="Wood W.I."/>
            <person name="Godowski P.J."/>
            <person name="Gray A.M."/>
        </authorList>
    </citation>
    <scope>NUCLEOTIDE SEQUENCE [LARGE SCALE MRNA] (ISOFORM 6)</scope>
</reference>
<reference key="5">
    <citation type="journal article" date="2004" name="Genome Biol.">
        <title>A genome annotation-driven approach to cloning the human ORFeome.</title>
        <authorList>
            <person name="Collins J.E."/>
            <person name="Wright C.L."/>
            <person name="Edwards C.A."/>
            <person name="Davis M.P."/>
            <person name="Grinham J.A."/>
            <person name="Cole C.G."/>
            <person name="Goward M.E."/>
            <person name="Aguado B."/>
            <person name="Mallya M."/>
            <person name="Mokrab Y."/>
            <person name="Huckle E.J."/>
            <person name="Beare D.M."/>
            <person name="Dunham I."/>
        </authorList>
    </citation>
    <scope>NUCLEOTIDE SEQUENCE [LARGE SCALE MRNA] (ISOFORM 5)</scope>
</reference>
<reference key="6">
    <citation type="journal article" date="1999" name="Nature">
        <title>The DNA sequence of human chromosome 22.</title>
        <authorList>
            <person name="Dunham I."/>
            <person name="Hunt A.R."/>
            <person name="Collins J.E."/>
            <person name="Bruskiewich R."/>
            <person name="Beare D.M."/>
            <person name="Clamp M."/>
            <person name="Smink L.J."/>
            <person name="Ainscough R."/>
            <person name="Almeida J.P."/>
            <person name="Babbage A.K."/>
            <person name="Bagguley C."/>
            <person name="Bailey J."/>
            <person name="Barlow K.F."/>
            <person name="Bates K.N."/>
            <person name="Beasley O.P."/>
            <person name="Bird C.P."/>
            <person name="Blakey S.E."/>
            <person name="Bridgeman A.M."/>
            <person name="Buck D."/>
            <person name="Burgess J."/>
            <person name="Burrill W.D."/>
            <person name="Burton J."/>
            <person name="Carder C."/>
            <person name="Carter N.P."/>
            <person name="Chen Y."/>
            <person name="Clark G."/>
            <person name="Clegg S.M."/>
            <person name="Cobley V.E."/>
            <person name="Cole C.G."/>
            <person name="Collier R.E."/>
            <person name="Connor R."/>
            <person name="Conroy D."/>
            <person name="Corby N.R."/>
            <person name="Coville G.J."/>
            <person name="Cox A.V."/>
            <person name="Davis J."/>
            <person name="Dawson E."/>
            <person name="Dhami P.D."/>
            <person name="Dockree C."/>
            <person name="Dodsworth S.J."/>
            <person name="Durbin R.M."/>
            <person name="Ellington A.G."/>
            <person name="Evans K.L."/>
            <person name="Fey J.M."/>
            <person name="Fleming K."/>
            <person name="French L."/>
            <person name="Garner A.A."/>
            <person name="Gilbert J.G.R."/>
            <person name="Goward M.E."/>
            <person name="Grafham D.V."/>
            <person name="Griffiths M.N.D."/>
            <person name="Hall C."/>
            <person name="Hall R.E."/>
            <person name="Hall-Tamlyn G."/>
            <person name="Heathcott R.W."/>
            <person name="Ho S."/>
            <person name="Holmes S."/>
            <person name="Hunt S.E."/>
            <person name="Jones M.C."/>
            <person name="Kershaw J."/>
            <person name="Kimberley A.M."/>
            <person name="King A."/>
            <person name="Laird G.K."/>
            <person name="Langford C.F."/>
            <person name="Leversha M.A."/>
            <person name="Lloyd C."/>
            <person name="Lloyd D.M."/>
            <person name="Martyn I.D."/>
            <person name="Mashreghi-Mohammadi M."/>
            <person name="Matthews L.H."/>
            <person name="Mccann O.T."/>
            <person name="Mcclay J."/>
            <person name="Mclaren S."/>
            <person name="McMurray A.A."/>
            <person name="Milne S.A."/>
            <person name="Mortimore B.J."/>
            <person name="Odell C.N."/>
            <person name="Pavitt R."/>
            <person name="Pearce A.V."/>
            <person name="Pearson D."/>
            <person name="Phillimore B.J.C.T."/>
            <person name="Phillips S.H."/>
            <person name="Plumb R.W."/>
            <person name="Ramsay H."/>
            <person name="Ramsey Y."/>
            <person name="Rogers L."/>
            <person name="Ross M.T."/>
            <person name="Scott C.E."/>
            <person name="Sehra H.K."/>
            <person name="Skuce C.D."/>
            <person name="Smalley S."/>
            <person name="Smith M.L."/>
            <person name="Soderlund C."/>
            <person name="Spragon L."/>
            <person name="Steward C.A."/>
            <person name="Sulston J.E."/>
            <person name="Swann R.M."/>
            <person name="Vaudin M."/>
            <person name="Wall M."/>
            <person name="Wallis J.M."/>
            <person name="Whiteley M.N."/>
            <person name="Willey D.L."/>
            <person name="Williams L."/>
            <person name="Williams S.A."/>
            <person name="Williamson H."/>
            <person name="Wilmer T.E."/>
            <person name="Wilming L."/>
            <person name="Wright C.L."/>
            <person name="Hubbard T."/>
            <person name="Bentley D.R."/>
            <person name="Beck S."/>
            <person name="Rogers J."/>
            <person name="Shimizu N."/>
            <person name="Minoshima S."/>
            <person name="Kawasaki K."/>
            <person name="Sasaki T."/>
            <person name="Asakawa S."/>
            <person name="Kudoh J."/>
            <person name="Shintani A."/>
            <person name="Shibuya K."/>
            <person name="Yoshizaki Y."/>
            <person name="Aoki N."/>
            <person name="Mitsuyama S."/>
            <person name="Roe B.A."/>
            <person name="Chen F."/>
            <person name="Chu L."/>
            <person name="Crabtree J."/>
            <person name="Deschamps S."/>
            <person name="Do A."/>
            <person name="Do T."/>
            <person name="Dorman A."/>
            <person name="Fang F."/>
            <person name="Fu Y."/>
            <person name="Hu P."/>
            <person name="Hua A."/>
            <person name="Kenton S."/>
            <person name="Lai H."/>
            <person name="Lao H.I."/>
            <person name="Lewis J."/>
            <person name="Lewis S."/>
            <person name="Lin S.-P."/>
            <person name="Loh P."/>
            <person name="Malaj E."/>
            <person name="Nguyen T."/>
            <person name="Pan H."/>
            <person name="Phan S."/>
            <person name="Qi S."/>
            <person name="Qian Y."/>
            <person name="Ray L."/>
            <person name="Ren Q."/>
            <person name="Shaull S."/>
            <person name="Sloan D."/>
            <person name="Song L."/>
            <person name="Wang Q."/>
            <person name="Wang Y."/>
            <person name="Wang Z."/>
            <person name="White J."/>
            <person name="Willingham D."/>
            <person name="Wu H."/>
            <person name="Yao Z."/>
            <person name="Zhan M."/>
            <person name="Zhang G."/>
            <person name="Chissoe S."/>
            <person name="Murray J."/>
            <person name="Miller N."/>
            <person name="Minx P."/>
            <person name="Fulton R."/>
            <person name="Johnson D."/>
            <person name="Bemis G."/>
            <person name="Bentley D."/>
            <person name="Bradshaw H."/>
            <person name="Bourne S."/>
            <person name="Cordes M."/>
            <person name="Du Z."/>
            <person name="Fulton L."/>
            <person name="Goela D."/>
            <person name="Graves T."/>
            <person name="Hawkins J."/>
            <person name="Hinds K."/>
            <person name="Kemp K."/>
            <person name="Latreille P."/>
            <person name="Layman D."/>
            <person name="Ozersky P."/>
            <person name="Rohlfing T."/>
            <person name="Scheet P."/>
            <person name="Walker C."/>
            <person name="Wamsley A."/>
            <person name="Wohldmann P."/>
            <person name="Pepin K."/>
            <person name="Nelson J."/>
            <person name="Korf I."/>
            <person name="Bedell J.A."/>
            <person name="Hillier L.W."/>
            <person name="Mardis E."/>
            <person name="Waterston R."/>
            <person name="Wilson R."/>
            <person name="Emanuel B.S."/>
            <person name="Shaikh T."/>
            <person name="Kurahashi H."/>
            <person name="Saitta S."/>
            <person name="Budarf M.L."/>
            <person name="McDermid H.E."/>
            <person name="Johnson A."/>
            <person name="Wong A.C.C."/>
            <person name="Morrow B.E."/>
            <person name="Edelmann L."/>
            <person name="Kim U.J."/>
            <person name="Shizuya H."/>
            <person name="Simon M.I."/>
            <person name="Dumanski J.P."/>
            <person name="Peyrard M."/>
            <person name="Kedra D."/>
            <person name="Seroussi E."/>
            <person name="Fransson I."/>
            <person name="Tapia I."/>
            <person name="Bruder C.E."/>
            <person name="O'Brien K.P."/>
            <person name="Wilkinson P."/>
            <person name="Bodenteich A."/>
            <person name="Hartman K."/>
            <person name="Hu X."/>
            <person name="Khan A.S."/>
            <person name="Lane L."/>
            <person name="Tilahun Y."/>
            <person name="Wright H."/>
        </authorList>
    </citation>
    <scope>NUCLEOTIDE SEQUENCE [LARGE SCALE GENOMIC DNA]</scope>
</reference>
<reference key="7">
    <citation type="journal article" date="2004" name="Genome Res.">
        <title>The status, quality, and expansion of the NIH full-length cDNA project: the Mammalian Gene Collection (MGC).</title>
        <authorList>
            <consortium name="The MGC Project Team"/>
        </authorList>
    </citation>
    <scope>NUCLEOTIDE SEQUENCE [LARGE SCALE MRNA] (ISOFORMS 1 AND 7)</scope>
    <scope>VARIANT ILE-430</scope>
    <source>
        <tissue>Brain</tissue>
    </source>
</reference>
<reference key="8">
    <citation type="journal article" date="2002" name="Nat. Genet.">
        <title>A genomic screen for genes upregulated by demethylation and histone deacetylase inhibition in human colorectal cancer.</title>
        <authorList>
            <person name="Suzuki H."/>
            <person name="Gabrielson E."/>
            <person name="Chen W."/>
            <person name="Anbazhagan R."/>
            <person name="Van Engeland M."/>
            <person name="Weijenberg M.P."/>
            <person name="Herman J.G."/>
            <person name="Baylin S.B."/>
        </authorList>
    </citation>
    <scope>GENE EXPRESSION REGULATION</scope>
</reference>
<reference key="9">
    <citation type="journal article" date="2013" name="J. Proteome Res.">
        <title>LC-MS/MS characterization of O-glycosylation sites and glycan structures of human cerebrospinal fluid glycoproteins.</title>
        <authorList>
            <person name="Halim A."/>
            <person name="Ruetschi U."/>
            <person name="Larson G."/>
            <person name="Nilsson J."/>
        </authorList>
    </citation>
    <scope>GLYCOSYLATION AT SER-49</scope>
    <scope>IDENTIFICATION BY MASS SPECTROMETRY</scope>
</reference>
<reference key="10">
    <citation type="submission" date="2009-02" db="PDB data bank">
        <title>Solution structure of the zinc finger domains (1-87) from human F-box only protein.</title>
        <authorList>
            <consortium name="RIKEN structural genomics initiative (RSGI)"/>
        </authorList>
    </citation>
    <scope>STRUCTURE BY NMR OF 745-802</scope>
    <scope>DISULFIDE BONDS</scope>
</reference>
<evidence type="ECO:0000250" key="1"/>
<evidence type="ECO:0000255" key="2"/>
<evidence type="ECO:0000255" key="3">
    <source>
        <dbReference type="PROSITE-ProRule" id="PRU00059"/>
    </source>
</evidence>
<evidence type="ECO:0000255" key="4">
    <source>
        <dbReference type="PROSITE-ProRule" id="PRU00302"/>
    </source>
</evidence>
<evidence type="ECO:0000256" key="5">
    <source>
        <dbReference type="SAM" id="MobiDB-lite"/>
    </source>
</evidence>
<evidence type="ECO:0000269" key="6">
    <source>
    </source>
</evidence>
<evidence type="ECO:0000269" key="7">
    <source>
    </source>
</evidence>
<evidence type="ECO:0000269" key="8">
    <source ref="10"/>
</evidence>
<evidence type="ECO:0000303" key="9">
    <source>
    </source>
</evidence>
<evidence type="ECO:0000303" key="10">
    <source>
    </source>
</evidence>
<evidence type="ECO:0000303" key="11">
    <source>
    </source>
</evidence>
<evidence type="ECO:0000303" key="12">
    <source>
    </source>
</evidence>
<evidence type="ECO:0000303" key="13">
    <source>
    </source>
</evidence>
<evidence type="ECO:0000305" key="14"/>
<evidence type="ECO:0007829" key="15">
    <source>
        <dbReference type="PDB" id="2YRA"/>
    </source>
</evidence>
<sequence length="1024" mass="111782">MPAARPPAAGLRGISLFLALLLGSPAAALERDALPEGDASPLGPYLLPSGAPERGSPGKEHPEERVVTAPPSSSQSAEVLGELVLDGTAPSAHHDIPALSPLLPEEARPKHALPPKKKLPSLKQVNSARKQLRPKATSAATVQRAGSQPASQGLDLLSSSTEKPGPPGDPDPIVASEEASEVPLWLDRKESAVPTTPAPLQISPFTSQPYVAHTLPQRPEPGEPGPDMAQEAPQEDTSPMALMDKGENELTGSASEESQETTTSTIITTTVITTEQAPALCSVSFSNPEGYIDSSDYPLLPLNNFLECTYNVTVYTGYGVELQVKSVNLSDGELLSIRGVDGPTLTVLANQTLLVEGQVIRSPTNTISVYFRTFQDDGLGTFQLHYQAFMLSCNFPRRPDSGDVTVMDLHSGGVAHFHCHLGYELQGAKMLTCINASKPHWSSQEPICSAPCGGAVHNATIGRVLSPSYPENTNGSQFCIWTIEAPEGQKLHLHFERLLLHDKDRMTVHSGQTNKSALLYDSLQTESVPFEGLLSEGNTIRIEFTSDQARAASTFNIRFEAFEKGHCYEPYIQNGNFTTSDPTYNIGTIVEFTCDPGHSLEQGPAIIECINVRDPYWNDTEPLCRAMCGGELSAVAGVVLSPNWPEPYVEGEDCIWKIHVGEEKRIFLDIQFLNLSNSDILTIYDGDEVMPHILGQYLGNSGPQKLYSSTPDLTIQFHSDPAGLIFGKGQGFIMNYIEVSRNDSCSDLPEIQNGWKTTSHTELVRGARITYQCDPGYDIVGSDTLTCQWDLSWSSDPPFCEKIMYCTDPGEVDHSTRLISDPVLLVGTTIQYTCNPGFVLEGSSLLTCYSRETGTPIWTSRLPHCVSEESLACDNPGLPENGYQILYKRLYLPGESLTFMCYEGFELMGEVTIRCILGQPSHWNGPLPVCKVNQDSFEHALEVAEAAAETSLEGGNMALAIFIPVLIISLLLGGAYIYITRCRYYSNLRLPLMYSHPYSQITVETEFDNPIYETGETREYEVSI</sequence>